<dbReference type="EMBL" id="Z14066">
    <property type="protein sequence ID" value="CAA78449.1"/>
    <property type="molecule type" value="mRNA"/>
</dbReference>
<dbReference type="EMBL" id="Z14067">
    <property type="protein sequence ID" value="CAA78450.1"/>
    <property type="molecule type" value="Genomic_DNA"/>
</dbReference>
<dbReference type="EMBL" id="BX284601">
    <property type="protein sequence ID" value="CAA98145.1"/>
    <property type="molecule type" value="Genomic_DNA"/>
</dbReference>
<dbReference type="PIR" id="T27885">
    <property type="entry name" value="T27885"/>
</dbReference>
<dbReference type="RefSeq" id="NP_492095.1">
    <property type="nucleotide sequence ID" value="NM_059694.6"/>
</dbReference>
<dbReference type="SMR" id="Q01608"/>
<dbReference type="BioGRID" id="37940">
    <property type="interactions" value="8"/>
</dbReference>
<dbReference type="FunCoup" id="Q01608">
    <property type="interactions" value="213"/>
</dbReference>
<dbReference type="STRING" id="6239.ZK524.1.1"/>
<dbReference type="MEROPS" id="A22.012"/>
<dbReference type="PaxDb" id="6239-ZK524.1"/>
<dbReference type="PeptideAtlas" id="Q01608"/>
<dbReference type="EnsemblMetazoa" id="ZK524.1.1">
    <property type="protein sequence ID" value="ZK524.1.1"/>
    <property type="gene ID" value="WBGene00004958"/>
</dbReference>
<dbReference type="GeneID" id="172498"/>
<dbReference type="KEGG" id="cel:CELE_ZK524.1"/>
<dbReference type="UCSC" id="ZK524.1">
    <property type="organism name" value="c. elegans"/>
</dbReference>
<dbReference type="AGR" id="WB:WBGene00004958"/>
<dbReference type="CTD" id="172498"/>
<dbReference type="WormBase" id="ZK524.1">
    <property type="protein sequence ID" value="CE06618"/>
    <property type="gene ID" value="WBGene00004958"/>
    <property type="gene designation" value="spe-4"/>
</dbReference>
<dbReference type="eggNOG" id="KOG2736">
    <property type="taxonomic scope" value="Eukaryota"/>
</dbReference>
<dbReference type="HOGENOM" id="CLU_022975_0_0_1"/>
<dbReference type="InParanoid" id="Q01608"/>
<dbReference type="OMA" id="CGTFCYF"/>
<dbReference type="OrthoDB" id="20287at2759"/>
<dbReference type="PhylomeDB" id="Q01608"/>
<dbReference type="PRO" id="PR:Q01608"/>
<dbReference type="Proteomes" id="UP000001940">
    <property type="component" value="Chromosome I"/>
</dbReference>
<dbReference type="Bgee" id="WBGene00004958">
    <property type="expression patterns" value="Expressed in larva and 1 other cell type or tissue"/>
</dbReference>
<dbReference type="GO" id="GO:0005789">
    <property type="term" value="C:endoplasmic reticulum membrane"/>
    <property type="evidence" value="ECO:0007669"/>
    <property type="project" value="UniProtKB-SubCell"/>
</dbReference>
<dbReference type="GO" id="GO:0070765">
    <property type="term" value="C:gamma-secretase complex"/>
    <property type="evidence" value="ECO:0000318"/>
    <property type="project" value="GO_Central"/>
</dbReference>
<dbReference type="GO" id="GO:0005794">
    <property type="term" value="C:Golgi apparatus"/>
    <property type="evidence" value="ECO:0007669"/>
    <property type="project" value="UniProtKB-SubCell"/>
</dbReference>
<dbReference type="GO" id="GO:0043231">
    <property type="term" value="C:intracellular membrane-bounded organelle"/>
    <property type="evidence" value="ECO:0000314"/>
    <property type="project" value="WormBase"/>
</dbReference>
<dbReference type="GO" id="GO:0042500">
    <property type="term" value="F:aspartic endopeptidase activity, intramembrane cleaving"/>
    <property type="evidence" value="ECO:0007669"/>
    <property type="project" value="InterPro"/>
</dbReference>
<dbReference type="GO" id="GO:0004175">
    <property type="term" value="F:endopeptidase activity"/>
    <property type="evidence" value="ECO:0000318"/>
    <property type="project" value="GO_Central"/>
</dbReference>
<dbReference type="GO" id="GO:0034205">
    <property type="term" value="P:amyloid-beta formation"/>
    <property type="evidence" value="ECO:0000318"/>
    <property type="project" value="GO_Central"/>
</dbReference>
<dbReference type="GO" id="GO:0055074">
    <property type="term" value="P:calcium ion homeostasis"/>
    <property type="evidence" value="ECO:0000318"/>
    <property type="project" value="GO_Central"/>
</dbReference>
<dbReference type="GO" id="GO:0061024">
    <property type="term" value="P:membrane organization"/>
    <property type="evidence" value="ECO:0000315"/>
    <property type="project" value="WormBase"/>
</dbReference>
<dbReference type="GO" id="GO:0006509">
    <property type="term" value="P:membrane protein ectodomain proteolysis"/>
    <property type="evidence" value="ECO:0000318"/>
    <property type="project" value="GO_Central"/>
</dbReference>
<dbReference type="GO" id="GO:0007219">
    <property type="term" value="P:Notch signaling pathway"/>
    <property type="evidence" value="ECO:0000318"/>
    <property type="project" value="GO_Central"/>
</dbReference>
<dbReference type="GO" id="GO:0006996">
    <property type="term" value="P:organelle organization"/>
    <property type="evidence" value="ECO:0000315"/>
    <property type="project" value="WormBase"/>
</dbReference>
<dbReference type="GO" id="GO:0008104">
    <property type="term" value="P:protein localization"/>
    <property type="evidence" value="ECO:0000315"/>
    <property type="project" value="WormBase"/>
</dbReference>
<dbReference type="GO" id="GO:0016485">
    <property type="term" value="P:protein processing"/>
    <property type="evidence" value="ECO:0000318"/>
    <property type="project" value="GO_Central"/>
</dbReference>
<dbReference type="GO" id="GO:0007286">
    <property type="term" value="P:spermatid development"/>
    <property type="evidence" value="ECO:0000315"/>
    <property type="project" value="WormBase"/>
</dbReference>
<dbReference type="GO" id="GO:0048515">
    <property type="term" value="P:spermatid differentiation"/>
    <property type="evidence" value="ECO:0000315"/>
    <property type="project" value="UniProtKB"/>
</dbReference>
<dbReference type="Gene3D" id="1.10.472.100">
    <property type="entry name" value="Presenilin"/>
    <property type="match status" value="1"/>
</dbReference>
<dbReference type="InterPro" id="IPR001108">
    <property type="entry name" value="Peptidase_A22A"/>
</dbReference>
<dbReference type="InterPro" id="IPR006639">
    <property type="entry name" value="Preselin/SPP"/>
</dbReference>
<dbReference type="InterPro" id="IPR042524">
    <property type="entry name" value="Presenilin_C"/>
</dbReference>
<dbReference type="PANTHER" id="PTHR10202">
    <property type="entry name" value="PRESENILIN"/>
    <property type="match status" value="1"/>
</dbReference>
<dbReference type="PANTHER" id="PTHR10202:SF25">
    <property type="entry name" value="PRESENILIN SPE-4"/>
    <property type="match status" value="1"/>
</dbReference>
<dbReference type="Pfam" id="PF01080">
    <property type="entry name" value="Presenilin"/>
    <property type="match status" value="1"/>
</dbReference>
<dbReference type="SMART" id="SM00730">
    <property type="entry name" value="PSN"/>
    <property type="match status" value="1"/>
</dbReference>
<organism>
    <name type="scientific">Caenorhabditis elegans</name>
    <dbReference type="NCBI Taxonomy" id="6239"/>
    <lineage>
        <taxon>Eukaryota</taxon>
        <taxon>Metazoa</taxon>
        <taxon>Ecdysozoa</taxon>
        <taxon>Nematoda</taxon>
        <taxon>Chromadorea</taxon>
        <taxon>Rhabditida</taxon>
        <taxon>Rhabditina</taxon>
        <taxon>Rhabditomorpha</taxon>
        <taxon>Rhabditoidea</taxon>
        <taxon>Rhabditidae</taxon>
        <taxon>Peloderinae</taxon>
        <taxon>Caenorhabditis</taxon>
    </lineage>
</organism>
<accession>Q01608</accession>
<protein>
    <recommendedName>
        <fullName>Presenilin spe-4</fullName>
    </recommendedName>
</protein>
<reference key="1">
    <citation type="journal article" date="1992" name="J. Cell Biol.">
        <title>Mutation of a putative sperm membrane protein in Caenorhabditis elegans prevents sperm differentiation but not its associated meiotic divisions.</title>
        <authorList>
            <person name="L'Hernault S.W."/>
            <person name="Arduengo P.M."/>
        </authorList>
    </citation>
    <scope>NUCLEOTIDE SEQUENCE [GENOMIC DNA / MRNA]</scope>
    <source>
        <strain>Bristol N2</strain>
    </source>
</reference>
<reference key="2">
    <citation type="journal article" date="1998" name="Science">
        <title>Genome sequence of the nematode C. elegans: a platform for investigating biology.</title>
        <authorList>
            <consortium name="The C. elegans sequencing consortium"/>
        </authorList>
    </citation>
    <scope>NUCLEOTIDE SEQUENCE [LARGE SCALE GENOMIC DNA]</scope>
    <source>
        <strain>Bristol N2</strain>
    </source>
</reference>
<reference key="3">
    <citation type="journal article" date="1998" name="J. Cell Sci.">
        <title>The presenilin protein family member SPE-4 localizes to an ER/Golgi derived organelle and is required for proper cytoplasmic partitioning during Caenorhabditis elegans spermatogenesis.</title>
        <authorList>
            <person name="Arduengo P.M."/>
            <person name="Appleberry O.K."/>
            <person name="Chuang P."/>
            <person name="L'Hernault S.W."/>
        </authorList>
    </citation>
    <scope>FUNCTION</scope>
    <scope>SUBCELLULAR LOCATION</scope>
    <scope>TISSUE SPECIFICITY</scope>
    <scope>MUTAGENESIS OF SER-177 AND PRO-440</scope>
</reference>
<reference key="4">
    <citation type="journal article" date="2018" name="PLoS Biol.">
        <title>The zinc transporter ZIPT-7.1 regulates sperm activation in nematodes.</title>
        <authorList>
            <person name="Zhao Y."/>
            <person name="Tan C.H."/>
            <person name="Krauchunas A."/>
            <person name="Scharf A."/>
            <person name="Dietrich N."/>
            <person name="Warnhoff K."/>
            <person name="Yuan Z."/>
            <person name="Druzhinina M."/>
            <person name="Gu S.G."/>
            <person name="Miao L."/>
            <person name="Singson A."/>
            <person name="Ellis R.E."/>
            <person name="Kornfeld K."/>
        </authorList>
    </citation>
    <scope>FUNCTION</scope>
    <scope>MUTAGENESIS OF HIS-165</scope>
</reference>
<gene>
    <name evidence="7" type="primary">spe-4</name>
    <name evidence="7" type="ORF">ZK524.1</name>
</gene>
<feature type="chain" id="PRO_0000073904" description="Presenilin spe-4">
    <location>
        <begin position="1"/>
        <end position="465"/>
    </location>
</feature>
<feature type="topological domain" description="Cytoplasmic" evidence="2">
    <location>
        <begin position="1"/>
        <end position="18"/>
    </location>
</feature>
<feature type="transmembrane region" description="Helical" evidence="2">
    <location>
        <begin position="19"/>
        <end position="39"/>
    </location>
</feature>
<feature type="topological domain" description="Lumenal" evidence="2">
    <location>
        <begin position="40"/>
        <end position="71"/>
    </location>
</feature>
<feature type="transmembrane region" description="Helical" evidence="2">
    <location>
        <begin position="72"/>
        <end position="92"/>
    </location>
</feature>
<feature type="topological domain" description="Cytoplasmic" evidence="2">
    <location>
        <begin position="93"/>
        <end position="96"/>
    </location>
</feature>
<feature type="transmembrane region" description="Helical" evidence="2">
    <location>
        <begin position="97"/>
        <end position="117"/>
    </location>
</feature>
<feature type="topological domain" description="Lumenal" evidence="2">
    <location>
        <begin position="118"/>
        <end position="136"/>
    </location>
</feature>
<feature type="transmembrane region" description="Helical" evidence="2">
    <location>
        <begin position="137"/>
        <end position="157"/>
    </location>
</feature>
<feature type="topological domain" description="Cytoplasmic" evidence="2">
    <location>
        <begin position="158"/>
        <end position="160"/>
    </location>
</feature>
<feature type="transmembrane region" description="Helical" evidence="2">
    <location>
        <begin position="161"/>
        <end position="181"/>
    </location>
</feature>
<feature type="topological domain" description="Lumenal" evidence="2">
    <location>
        <begin position="182"/>
        <end position="190"/>
    </location>
</feature>
<feature type="transmembrane region" description="Helical" evidence="2">
    <location>
        <begin position="191"/>
        <end position="211"/>
    </location>
</feature>
<feature type="topological domain" description="Cytoplasmic" evidence="2">
    <location>
        <begin position="212"/>
        <end position="389"/>
    </location>
</feature>
<feature type="transmembrane region" description="Helical" evidence="2">
    <location>
        <begin position="390"/>
        <end position="410"/>
    </location>
</feature>
<feature type="topological domain" description="Lumenal" evidence="2">
    <location>
        <position position="411"/>
    </location>
</feature>
<feature type="transmembrane region" description="Helical" evidence="2">
    <location>
        <begin position="412"/>
        <end position="432"/>
    </location>
</feature>
<feature type="topological domain" description="Cytoplasmic" evidence="2">
    <location>
        <begin position="433"/>
        <end position="439"/>
    </location>
</feature>
<feature type="intramembrane region" description="Helical" evidence="2">
    <location>
        <begin position="440"/>
        <end position="460"/>
    </location>
</feature>
<feature type="topological domain" description="Cytoplasmic" evidence="2">
    <location>
        <begin position="461"/>
        <end position="465"/>
    </location>
</feature>
<feature type="region of interest" description="Disordered" evidence="3">
    <location>
        <begin position="287"/>
        <end position="356"/>
    </location>
</feature>
<feature type="short sequence motif" description="PAL">
    <location>
        <begin position="440"/>
        <end position="442"/>
    </location>
</feature>
<feature type="compositionally biased region" description="Low complexity" evidence="3">
    <location>
        <begin position="326"/>
        <end position="350"/>
    </location>
</feature>
<feature type="active site" evidence="1">
    <location>
        <position position="200"/>
    </location>
</feature>
<feature type="active site" evidence="1">
    <location>
        <position position="394"/>
    </location>
</feature>
<feature type="mutagenesis site" description="In hc196; failed spermatocyte division in a zipt-7.1 mutant (ok971) background." evidence="4">
    <original>H</original>
    <variation>Y</variation>
    <location>
        <position position="165"/>
    </location>
</feature>
<feature type="mutagenesis site" description="In HC78; induces an aberrant localization of tubulin in spermatids." evidence="5">
    <original>S</original>
    <variation>F</variation>
    <location>
        <position position="177"/>
    </location>
</feature>
<feature type="mutagenesis site" description="In HC78; induces an aberrant localization of tubulin in spermatids." evidence="5">
    <original>P</original>
    <variation>L</variation>
    <location>
        <position position="440"/>
    </location>
</feature>
<evidence type="ECO:0000250" key="1"/>
<evidence type="ECO:0000255" key="2"/>
<evidence type="ECO:0000256" key="3">
    <source>
        <dbReference type="SAM" id="MobiDB-lite"/>
    </source>
</evidence>
<evidence type="ECO:0000269" key="4">
    <source>
    </source>
</evidence>
<evidence type="ECO:0000269" key="5">
    <source>
    </source>
</evidence>
<evidence type="ECO:0000305" key="6"/>
<evidence type="ECO:0000312" key="7">
    <source>
        <dbReference type="WormBase" id="ZK524.1"/>
    </source>
</evidence>
<comment type="function">
    <text evidence="4 5 6">Potential catalytic subunit of the gamma-secretase complex during spermatogenesis, an endoprotease complex that catalyzes the intramembrane cleavage of integral membrane proteins such as Notch receptors (lin-12 or glp-1) (Probable). Involved in spermatid formation during meiosis II (PubMed:29879108, PubMed:9819355). May be required for proper localization of macromolecules that are subject to asymmetric partitioning during spermatogenesis (PubMed:9819355).</text>
</comment>
<comment type="subunit">
    <text evidence="6">Homodimer. Potential component of the gamma-secretase complex, a complex probably composed of the presenilin homodimer (sel-12, hop-1 or spe-4), nicastrin (aph-2), aph-1 and pen-2 (Probable).</text>
</comment>
<comment type="subcellular location">
    <subcellularLocation>
        <location evidence="5">Endoplasmic reticulum membrane</location>
        <topology evidence="5">Multi-pass membrane protein</topology>
    </subcellularLocation>
    <subcellularLocation>
        <location evidence="5">Golgi apparatus</location>
        <location evidence="5">cis-Golgi network membrane</location>
        <topology evidence="5">Multi-pass membrane protein</topology>
    </subcellularLocation>
    <text>Predominantly located in the endoplasmic reticulum and in the cis-Golgi.</text>
</comment>
<comment type="developmental stage">
    <text>Expressed during L4 stage, during spermatogenesis, when hermaphrodites produces sperm.</text>
</comment>
<comment type="domain">
    <text evidence="1">The PAL motif is required for normal active site conformation.</text>
</comment>
<comment type="similarity">
    <text evidence="6">Belongs to the peptidase A22A family.</text>
</comment>
<keyword id="KW-0221">Differentiation</keyword>
<keyword id="KW-0256">Endoplasmic reticulum</keyword>
<keyword id="KW-0333">Golgi apparatus</keyword>
<keyword id="KW-0472">Membrane</keyword>
<keyword id="KW-0914">Notch signaling pathway</keyword>
<keyword id="KW-1185">Reference proteome</keyword>
<keyword id="KW-0744">Spermatogenesis</keyword>
<keyword id="KW-0812">Transmembrane</keyword>
<keyword id="KW-1133">Transmembrane helix</keyword>
<name>SPE4_CAEEL</name>
<proteinExistence type="evidence at protein level"/>
<sequence length="465" mass="51830">MDTLRSISSELVRSSQLRWTLFSVIANMSLTLSIWIGVYNMEVNSELSKTYFLDPSFEQTTGNLLLDGFINGVGTILVLGCVSFIMLAFVLFDFRRIVKAWLTLSCLLILFGVSAQTLHDMFSQVFDQDDNNQYYMTIVLIVVPTVVYGFGGIYAFFSNSSLILHQIFVVTNCSLISVFYLRVFPSKTTWFVLWIVLFWDLFAVLAPMGPLKKVQEKASDYSKCVLNLIMFSANEKRLTAGSNQEETNEGEESTIRRTVKQTIEYYTKREAQDDEFYQKIRQRRAAINPDSVPTEHSPLVEAEPSPIELKEKNSTEELSDDESDTSETSSGSSNLSSSDSSTTVSTSDISTAEECDQKEWDDLVSNSLPNNDKRPATAADALNDGEVLRLGFGDFVFYSLLIGQAAASGCPFAVISAALGILFGLVVTLTVFSTEESTTPALPLPVICGTFCYFSSMFFWEQLYG</sequence>